<accession>Q98B75</accession>
<sequence>MKITVLGAGVVGTAAAYYLAADGHEVTVIERHAAPARGTSQSNAGLVSPGDATAWASPAALKTFLRGLYNHDLGIKVRLRFDPYFLAWSLRFLRQCTVARLRANSQVKLRLALYSRDCINAISADTGIHYDERKKGILYFFRSQHSLNTGTDNYRYLAEHGLPIEIVGRDRLVELEPGLAGVKEKIAGGVYSPIDQTGDSRLFVDNLAAYASEKLGVKFLFGTTVEGLDIQGDRVRAVMTSAGPVTGDAVVISMGPESGLLGRRYGIDLPVYPVKGYTATIPLEDESKGPTIGGADEDQLMAYSRLGNRLRLASTAEFTGFDRTHKPSDFTTMFRTARDLFPGAFDEKKAELWAGLRPMMPGSVPVIGQARYKNLYLDTGHGHVGWTMACGSGKFLADLVAGRKPEIDPQGLVYGG</sequence>
<gene>
    <name type="primary">dadA2</name>
    <name type="ordered locus">mlr5698</name>
</gene>
<organism>
    <name type="scientific">Mesorhizobium japonicum (strain LMG 29417 / CECT 9101 / MAFF 303099)</name>
    <name type="common">Mesorhizobium loti (strain MAFF 303099)</name>
    <dbReference type="NCBI Taxonomy" id="266835"/>
    <lineage>
        <taxon>Bacteria</taxon>
        <taxon>Pseudomonadati</taxon>
        <taxon>Pseudomonadota</taxon>
        <taxon>Alphaproteobacteria</taxon>
        <taxon>Hyphomicrobiales</taxon>
        <taxon>Phyllobacteriaceae</taxon>
        <taxon>Mesorhizobium</taxon>
    </lineage>
</organism>
<name>DADA2_RHILO</name>
<comment type="function">
    <text evidence="1">Oxidative deamination of D-amino acids.</text>
</comment>
<comment type="catalytic activity">
    <reaction>
        <text>a D-alpha-amino acid + A + H2O = a 2-oxocarboxylate + AH2 + NH4(+)</text>
        <dbReference type="Rhea" id="RHEA:18125"/>
        <dbReference type="ChEBI" id="CHEBI:13193"/>
        <dbReference type="ChEBI" id="CHEBI:15377"/>
        <dbReference type="ChEBI" id="CHEBI:17499"/>
        <dbReference type="ChEBI" id="CHEBI:28938"/>
        <dbReference type="ChEBI" id="CHEBI:35179"/>
        <dbReference type="ChEBI" id="CHEBI:59871"/>
    </reaction>
</comment>
<comment type="cofactor">
    <cofactor evidence="1">
        <name>FAD</name>
        <dbReference type="ChEBI" id="CHEBI:57692"/>
    </cofactor>
</comment>
<comment type="similarity">
    <text evidence="3">Belongs to the DadA oxidoreductase family.</text>
</comment>
<evidence type="ECO:0000250" key="1"/>
<evidence type="ECO:0000255" key="2"/>
<evidence type="ECO:0000305" key="3"/>
<feature type="chain" id="PRO_0000166146" description="D-amino acid dehydrogenase 2">
    <location>
        <begin position="1"/>
        <end position="416"/>
    </location>
</feature>
<feature type="binding site" evidence="2">
    <location>
        <begin position="3"/>
        <end position="17"/>
    </location>
    <ligand>
        <name>FAD</name>
        <dbReference type="ChEBI" id="CHEBI:57692"/>
    </ligand>
</feature>
<reference key="1">
    <citation type="journal article" date="2000" name="DNA Res.">
        <title>Complete genome structure of the nitrogen-fixing symbiotic bacterium Mesorhizobium loti.</title>
        <authorList>
            <person name="Kaneko T."/>
            <person name="Nakamura Y."/>
            <person name="Sato S."/>
            <person name="Asamizu E."/>
            <person name="Kato T."/>
            <person name="Sasamoto S."/>
            <person name="Watanabe A."/>
            <person name="Idesawa K."/>
            <person name="Ishikawa A."/>
            <person name="Kawashima K."/>
            <person name="Kimura T."/>
            <person name="Kishida Y."/>
            <person name="Kiyokawa C."/>
            <person name="Kohara M."/>
            <person name="Matsumoto M."/>
            <person name="Matsuno A."/>
            <person name="Mochizuki Y."/>
            <person name="Nakayama S."/>
            <person name="Nakazaki N."/>
            <person name="Shimpo S."/>
            <person name="Sugimoto M."/>
            <person name="Takeuchi C."/>
            <person name="Yamada M."/>
            <person name="Tabata S."/>
        </authorList>
    </citation>
    <scope>NUCLEOTIDE SEQUENCE [LARGE SCALE GENOMIC DNA]</scope>
    <source>
        <strain>LMG 29417 / CECT 9101 / MAFF 303099</strain>
    </source>
</reference>
<protein>
    <recommendedName>
        <fullName>D-amino acid dehydrogenase 2</fullName>
        <ecNumber>1.4.99.-</ecNumber>
    </recommendedName>
</protein>
<keyword id="KW-0274">FAD</keyword>
<keyword id="KW-0285">Flavoprotein</keyword>
<keyword id="KW-0560">Oxidoreductase</keyword>
<dbReference type="EC" id="1.4.99.-"/>
<dbReference type="EMBL" id="BA000012">
    <property type="protein sequence ID" value="BAB52097.1"/>
    <property type="molecule type" value="Genomic_DNA"/>
</dbReference>
<dbReference type="RefSeq" id="WP_010913435.1">
    <property type="nucleotide sequence ID" value="NC_002678.2"/>
</dbReference>
<dbReference type="SMR" id="Q98B75"/>
<dbReference type="KEGG" id="mlo:mlr5698"/>
<dbReference type="PATRIC" id="fig|266835.9.peg.4531"/>
<dbReference type="eggNOG" id="COG0665">
    <property type="taxonomic scope" value="Bacteria"/>
</dbReference>
<dbReference type="HOGENOM" id="CLU_007884_9_2_5"/>
<dbReference type="Proteomes" id="UP000000552">
    <property type="component" value="Chromosome"/>
</dbReference>
<dbReference type="GO" id="GO:0005737">
    <property type="term" value="C:cytoplasm"/>
    <property type="evidence" value="ECO:0007669"/>
    <property type="project" value="TreeGrafter"/>
</dbReference>
<dbReference type="GO" id="GO:0005886">
    <property type="term" value="C:plasma membrane"/>
    <property type="evidence" value="ECO:0007669"/>
    <property type="project" value="TreeGrafter"/>
</dbReference>
<dbReference type="GO" id="GO:0008718">
    <property type="term" value="F:D-amino-acid dehydrogenase activity"/>
    <property type="evidence" value="ECO:0007669"/>
    <property type="project" value="UniProtKB-UniRule"/>
</dbReference>
<dbReference type="GO" id="GO:0055130">
    <property type="term" value="P:D-alanine catabolic process"/>
    <property type="evidence" value="ECO:0007669"/>
    <property type="project" value="TreeGrafter"/>
</dbReference>
<dbReference type="Gene3D" id="3.30.9.10">
    <property type="entry name" value="D-Amino Acid Oxidase, subunit A, domain 2"/>
    <property type="match status" value="1"/>
</dbReference>
<dbReference type="Gene3D" id="3.50.50.60">
    <property type="entry name" value="FAD/NAD(P)-binding domain"/>
    <property type="match status" value="2"/>
</dbReference>
<dbReference type="HAMAP" id="MF_01202">
    <property type="entry name" value="DadA"/>
    <property type="match status" value="1"/>
</dbReference>
<dbReference type="InterPro" id="IPR023080">
    <property type="entry name" value="DadA"/>
</dbReference>
<dbReference type="InterPro" id="IPR006076">
    <property type="entry name" value="FAD-dep_OxRdtase"/>
</dbReference>
<dbReference type="InterPro" id="IPR036188">
    <property type="entry name" value="FAD/NAD-bd_sf"/>
</dbReference>
<dbReference type="NCBIfam" id="NF001933">
    <property type="entry name" value="PRK00711.1"/>
    <property type="match status" value="1"/>
</dbReference>
<dbReference type="PANTHER" id="PTHR13847:SF280">
    <property type="entry name" value="D-AMINO ACID DEHYDROGENASE"/>
    <property type="match status" value="1"/>
</dbReference>
<dbReference type="PANTHER" id="PTHR13847">
    <property type="entry name" value="SARCOSINE DEHYDROGENASE-RELATED"/>
    <property type="match status" value="1"/>
</dbReference>
<dbReference type="Pfam" id="PF01266">
    <property type="entry name" value="DAO"/>
    <property type="match status" value="1"/>
</dbReference>
<dbReference type="SUPFAM" id="SSF54373">
    <property type="entry name" value="FAD-linked reductases, C-terminal domain"/>
    <property type="match status" value="1"/>
</dbReference>
<dbReference type="SUPFAM" id="SSF51905">
    <property type="entry name" value="FAD/NAD(P)-binding domain"/>
    <property type="match status" value="1"/>
</dbReference>
<proteinExistence type="inferred from homology"/>